<protein>
    <recommendedName>
        <fullName evidence="1">Siroheme synthase 2</fullName>
    </recommendedName>
    <domain>
        <recommendedName>
            <fullName evidence="1">Uroporphyrinogen-III C-methyltransferase 2</fullName>
            <shortName evidence="1">Urogen III methylase 2</shortName>
            <ecNumber evidence="1">2.1.1.107</ecNumber>
        </recommendedName>
        <alternativeName>
            <fullName evidence="1">SUMT 2</fullName>
        </alternativeName>
        <alternativeName>
            <fullName evidence="1">Uroporphyrinogen III methylase 2</fullName>
            <shortName evidence="1">UROM 2</shortName>
        </alternativeName>
    </domain>
    <domain>
        <recommendedName>
            <fullName evidence="1">Precorrin-2 dehydrogenase 2</fullName>
            <ecNumber evidence="1">1.3.1.76</ecNumber>
        </recommendedName>
    </domain>
    <domain>
        <recommendedName>
            <fullName evidence="1">Sirohydrochlorin ferrochelatase 2</fullName>
            <ecNumber evidence="1">4.99.1.4</ecNumber>
        </recommendedName>
    </domain>
</protein>
<accession>A1JSB7</accession>
<gene>
    <name evidence="1" type="primary">cysG2</name>
    <name type="ordered locus">YE3968</name>
</gene>
<name>CYSG2_YERE8</name>
<reference key="1">
    <citation type="journal article" date="2006" name="PLoS Genet.">
        <title>The complete genome sequence and comparative genome analysis of the high pathogenicity Yersinia enterocolitica strain 8081.</title>
        <authorList>
            <person name="Thomson N.R."/>
            <person name="Howard S."/>
            <person name="Wren B.W."/>
            <person name="Holden M.T.G."/>
            <person name="Crossman L."/>
            <person name="Challis G.L."/>
            <person name="Churcher C."/>
            <person name="Mungall K."/>
            <person name="Brooks K."/>
            <person name="Chillingworth T."/>
            <person name="Feltwell T."/>
            <person name="Abdellah Z."/>
            <person name="Hauser H."/>
            <person name="Jagels K."/>
            <person name="Maddison M."/>
            <person name="Moule S."/>
            <person name="Sanders M."/>
            <person name="Whitehead S."/>
            <person name="Quail M.A."/>
            <person name="Dougan G."/>
            <person name="Parkhill J."/>
            <person name="Prentice M.B."/>
        </authorList>
    </citation>
    <scope>NUCLEOTIDE SEQUENCE [LARGE SCALE GENOMIC DNA]</scope>
    <source>
        <strain>NCTC 13174 / 8081</strain>
    </source>
</reference>
<sequence>MDYFPIFCQLQNKACLLVGGGEVAERKARLLLDAGAAVTVNACEFTEQFHDWAEQGLLSLVSGEFAPELLAEKWLVIAATDQVAVNALVYQSANQQRVFCNVVDDPKRTSFIMPSIIDRSPIMIAISSGGKAPVLARLLREKLEAMLPQHLGQLAQLAGNLRQRVKQHFAAMTDRRRFWEKLLTHDRLAQSLANEDQVQVEQHVEQLFNAPLSDRGEVVLVGAGPGDAGLLTLKGLQQIQQADVVVYDRLVSDEVMNLVRRDAERIFVGKESGRHTVPQDQINQILLQQAQQGKRVVRLKGGDPFIFGRGGEELETLADYNIPFSVVPGITAASGCSAYSGIPLTHRDHAQSVRLITGHAKKDSQLDWANLAAEKQTLVFYMGLSQAGEIQQQLIRHGMPAATPVALVENGTSRHQRVVSGELSQLALLSQQVSSPSLIIVGSVVSLREKLNWFSSAEHGKTGMKEQVERVG</sequence>
<proteinExistence type="inferred from homology"/>
<dbReference type="EC" id="2.1.1.107" evidence="1"/>
<dbReference type="EC" id="1.3.1.76" evidence="1"/>
<dbReference type="EC" id="4.99.1.4" evidence="1"/>
<dbReference type="EMBL" id="AM286415">
    <property type="protein sequence ID" value="CAL13987.1"/>
    <property type="molecule type" value="Genomic_DNA"/>
</dbReference>
<dbReference type="RefSeq" id="WP_011817342.1">
    <property type="nucleotide sequence ID" value="NC_008800.1"/>
</dbReference>
<dbReference type="RefSeq" id="YP_001008113.1">
    <property type="nucleotide sequence ID" value="NC_008800.1"/>
</dbReference>
<dbReference type="SMR" id="A1JSB7"/>
<dbReference type="KEGG" id="yen:YE3968"/>
<dbReference type="PATRIC" id="fig|393305.7.peg.4223"/>
<dbReference type="eggNOG" id="COG0007">
    <property type="taxonomic scope" value="Bacteria"/>
</dbReference>
<dbReference type="eggNOG" id="COG1648">
    <property type="taxonomic scope" value="Bacteria"/>
</dbReference>
<dbReference type="HOGENOM" id="CLU_011276_2_1_6"/>
<dbReference type="OrthoDB" id="9815856at2"/>
<dbReference type="UniPathway" id="UPA00148">
    <property type="reaction ID" value="UER00211"/>
</dbReference>
<dbReference type="UniPathway" id="UPA00148">
    <property type="reaction ID" value="UER00222"/>
</dbReference>
<dbReference type="UniPathway" id="UPA00262">
    <property type="reaction ID" value="UER00211"/>
</dbReference>
<dbReference type="UniPathway" id="UPA00262">
    <property type="reaction ID" value="UER00222"/>
</dbReference>
<dbReference type="UniPathway" id="UPA00262">
    <property type="reaction ID" value="UER00376"/>
</dbReference>
<dbReference type="Proteomes" id="UP000000642">
    <property type="component" value="Chromosome"/>
</dbReference>
<dbReference type="GO" id="GO:0051287">
    <property type="term" value="F:NAD binding"/>
    <property type="evidence" value="ECO:0007669"/>
    <property type="project" value="InterPro"/>
</dbReference>
<dbReference type="GO" id="GO:0043115">
    <property type="term" value="F:precorrin-2 dehydrogenase activity"/>
    <property type="evidence" value="ECO:0007669"/>
    <property type="project" value="UniProtKB-UniRule"/>
</dbReference>
<dbReference type="GO" id="GO:0051266">
    <property type="term" value="F:sirohydrochlorin ferrochelatase activity"/>
    <property type="evidence" value="ECO:0007669"/>
    <property type="project" value="UniProtKB-EC"/>
</dbReference>
<dbReference type="GO" id="GO:0004851">
    <property type="term" value="F:uroporphyrin-III C-methyltransferase activity"/>
    <property type="evidence" value="ECO:0007669"/>
    <property type="project" value="UniProtKB-UniRule"/>
</dbReference>
<dbReference type="GO" id="GO:0009236">
    <property type="term" value="P:cobalamin biosynthetic process"/>
    <property type="evidence" value="ECO:0007669"/>
    <property type="project" value="UniProtKB-UniRule"/>
</dbReference>
<dbReference type="GO" id="GO:0032259">
    <property type="term" value="P:methylation"/>
    <property type="evidence" value="ECO:0007669"/>
    <property type="project" value="UniProtKB-KW"/>
</dbReference>
<dbReference type="GO" id="GO:0019354">
    <property type="term" value="P:siroheme biosynthetic process"/>
    <property type="evidence" value="ECO:0007669"/>
    <property type="project" value="UniProtKB-UniRule"/>
</dbReference>
<dbReference type="CDD" id="cd11642">
    <property type="entry name" value="SUMT"/>
    <property type="match status" value="1"/>
</dbReference>
<dbReference type="FunFam" id="1.10.8.210:FF:000001">
    <property type="entry name" value="Siroheme synthase"/>
    <property type="match status" value="1"/>
</dbReference>
<dbReference type="FunFam" id="3.30.160.110:FF:000001">
    <property type="entry name" value="Siroheme synthase"/>
    <property type="match status" value="1"/>
</dbReference>
<dbReference type="FunFam" id="3.30.950.10:FF:000001">
    <property type="entry name" value="Siroheme synthase"/>
    <property type="match status" value="1"/>
</dbReference>
<dbReference type="FunFam" id="3.40.1010.10:FF:000001">
    <property type="entry name" value="Siroheme synthase"/>
    <property type="match status" value="1"/>
</dbReference>
<dbReference type="FunFam" id="3.40.50.720:FF:000092">
    <property type="entry name" value="Siroheme synthase"/>
    <property type="match status" value="1"/>
</dbReference>
<dbReference type="Gene3D" id="3.40.1010.10">
    <property type="entry name" value="Cobalt-precorrin-4 Transmethylase, Domain 1"/>
    <property type="match status" value="1"/>
</dbReference>
<dbReference type="Gene3D" id="3.30.950.10">
    <property type="entry name" value="Methyltransferase, Cobalt-precorrin-4 Transmethylase, Domain 2"/>
    <property type="match status" value="1"/>
</dbReference>
<dbReference type="Gene3D" id="3.40.50.720">
    <property type="entry name" value="NAD(P)-binding Rossmann-like Domain"/>
    <property type="match status" value="1"/>
</dbReference>
<dbReference type="Gene3D" id="1.10.8.210">
    <property type="entry name" value="Sirohaem synthase, dimerisation domain"/>
    <property type="match status" value="1"/>
</dbReference>
<dbReference type="Gene3D" id="3.30.160.110">
    <property type="entry name" value="Siroheme synthase, domain 2"/>
    <property type="match status" value="1"/>
</dbReference>
<dbReference type="HAMAP" id="MF_01646">
    <property type="entry name" value="Siroheme_synth"/>
    <property type="match status" value="1"/>
</dbReference>
<dbReference type="InterPro" id="IPR000878">
    <property type="entry name" value="4pyrrol_Mease"/>
</dbReference>
<dbReference type="InterPro" id="IPR035996">
    <property type="entry name" value="4pyrrol_Methylase_sf"/>
</dbReference>
<dbReference type="InterPro" id="IPR014777">
    <property type="entry name" value="4pyrrole_Mease_sub1"/>
</dbReference>
<dbReference type="InterPro" id="IPR014776">
    <property type="entry name" value="4pyrrole_Mease_sub2"/>
</dbReference>
<dbReference type="InterPro" id="IPR006366">
    <property type="entry name" value="CobA/CysG_C"/>
</dbReference>
<dbReference type="InterPro" id="IPR036291">
    <property type="entry name" value="NAD(P)-bd_dom_sf"/>
</dbReference>
<dbReference type="InterPro" id="IPR050161">
    <property type="entry name" value="Siro_Cobalamin_biosynth"/>
</dbReference>
<dbReference type="InterPro" id="IPR037115">
    <property type="entry name" value="Sirohaem_synt_dimer_dom_sf"/>
</dbReference>
<dbReference type="InterPro" id="IPR012409">
    <property type="entry name" value="Sirohaem_synth"/>
</dbReference>
<dbReference type="InterPro" id="IPR028281">
    <property type="entry name" value="Sirohaem_synthase_central"/>
</dbReference>
<dbReference type="InterPro" id="IPR019478">
    <property type="entry name" value="Sirohaem_synthase_dimer_dom"/>
</dbReference>
<dbReference type="InterPro" id="IPR006367">
    <property type="entry name" value="Sirohaem_synthase_N"/>
</dbReference>
<dbReference type="InterPro" id="IPR003043">
    <property type="entry name" value="Uropor_MeTrfase_CS"/>
</dbReference>
<dbReference type="NCBIfam" id="TIGR01469">
    <property type="entry name" value="cobA_cysG_Cterm"/>
    <property type="match status" value="1"/>
</dbReference>
<dbReference type="NCBIfam" id="TIGR01470">
    <property type="entry name" value="cysG_Nterm"/>
    <property type="match status" value="1"/>
</dbReference>
<dbReference type="NCBIfam" id="NF004790">
    <property type="entry name" value="PRK06136.1"/>
    <property type="match status" value="1"/>
</dbReference>
<dbReference type="NCBIfam" id="NF007922">
    <property type="entry name" value="PRK10637.1"/>
    <property type="match status" value="1"/>
</dbReference>
<dbReference type="PANTHER" id="PTHR45790:SF1">
    <property type="entry name" value="SIROHEME SYNTHASE"/>
    <property type="match status" value="1"/>
</dbReference>
<dbReference type="PANTHER" id="PTHR45790">
    <property type="entry name" value="SIROHEME SYNTHASE-RELATED"/>
    <property type="match status" value="1"/>
</dbReference>
<dbReference type="Pfam" id="PF10414">
    <property type="entry name" value="CysG_dimeriser"/>
    <property type="match status" value="1"/>
</dbReference>
<dbReference type="Pfam" id="PF13241">
    <property type="entry name" value="NAD_binding_7"/>
    <property type="match status" value="1"/>
</dbReference>
<dbReference type="Pfam" id="PF14824">
    <property type="entry name" value="Sirohm_synth_M"/>
    <property type="match status" value="1"/>
</dbReference>
<dbReference type="Pfam" id="PF00590">
    <property type="entry name" value="TP_methylase"/>
    <property type="match status" value="1"/>
</dbReference>
<dbReference type="PIRSF" id="PIRSF036426">
    <property type="entry name" value="Sirohaem_synth"/>
    <property type="match status" value="1"/>
</dbReference>
<dbReference type="SUPFAM" id="SSF51735">
    <property type="entry name" value="NAD(P)-binding Rossmann-fold domains"/>
    <property type="match status" value="1"/>
</dbReference>
<dbReference type="SUPFAM" id="SSF75615">
    <property type="entry name" value="Siroheme synthase middle domains-like"/>
    <property type="match status" value="1"/>
</dbReference>
<dbReference type="SUPFAM" id="SSF53790">
    <property type="entry name" value="Tetrapyrrole methylase"/>
    <property type="match status" value="1"/>
</dbReference>
<dbReference type="PROSITE" id="PS00839">
    <property type="entry name" value="SUMT_1"/>
    <property type="match status" value="1"/>
</dbReference>
<dbReference type="PROSITE" id="PS00840">
    <property type="entry name" value="SUMT_2"/>
    <property type="match status" value="1"/>
</dbReference>
<organism>
    <name type="scientific">Yersinia enterocolitica serotype O:8 / biotype 1B (strain NCTC 13174 / 8081)</name>
    <dbReference type="NCBI Taxonomy" id="393305"/>
    <lineage>
        <taxon>Bacteria</taxon>
        <taxon>Pseudomonadati</taxon>
        <taxon>Pseudomonadota</taxon>
        <taxon>Gammaproteobacteria</taxon>
        <taxon>Enterobacterales</taxon>
        <taxon>Yersiniaceae</taxon>
        <taxon>Yersinia</taxon>
    </lineage>
</organism>
<evidence type="ECO:0000255" key="1">
    <source>
        <dbReference type="HAMAP-Rule" id="MF_01646"/>
    </source>
</evidence>
<comment type="function">
    <text evidence="1">Multifunctional enzyme that catalyzes the SAM-dependent methylations of uroporphyrinogen III at position C-2 and C-7 to form precorrin-2 via precorrin-1. Then it catalyzes the NAD-dependent ring dehydrogenation of precorrin-2 to yield sirohydrochlorin. Finally, it catalyzes the ferrochelation of sirohydrochlorin to yield siroheme.</text>
</comment>
<comment type="catalytic activity">
    <reaction evidence="1">
        <text>uroporphyrinogen III + 2 S-adenosyl-L-methionine = precorrin-2 + 2 S-adenosyl-L-homocysteine + H(+)</text>
        <dbReference type="Rhea" id="RHEA:32459"/>
        <dbReference type="ChEBI" id="CHEBI:15378"/>
        <dbReference type="ChEBI" id="CHEBI:57308"/>
        <dbReference type="ChEBI" id="CHEBI:57856"/>
        <dbReference type="ChEBI" id="CHEBI:58827"/>
        <dbReference type="ChEBI" id="CHEBI:59789"/>
        <dbReference type="EC" id="2.1.1.107"/>
    </reaction>
</comment>
<comment type="catalytic activity">
    <reaction evidence="1">
        <text>precorrin-2 + NAD(+) = sirohydrochlorin + NADH + 2 H(+)</text>
        <dbReference type="Rhea" id="RHEA:15613"/>
        <dbReference type="ChEBI" id="CHEBI:15378"/>
        <dbReference type="ChEBI" id="CHEBI:57540"/>
        <dbReference type="ChEBI" id="CHEBI:57945"/>
        <dbReference type="ChEBI" id="CHEBI:58351"/>
        <dbReference type="ChEBI" id="CHEBI:58827"/>
        <dbReference type="EC" id="1.3.1.76"/>
    </reaction>
</comment>
<comment type="catalytic activity">
    <reaction evidence="1">
        <text>siroheme + 2 H(+) = sirohydrochlorin + Fe(2+)</text>
        <dbReference type="Rhea" id="RHEA:24360"/>
        <dbReference type="ChEBI" id="CHEBI:15378"/>
        <dbReference type="ChEBI" id="CHEBI:29033"/>
        <dbReference type="ChEBI" id="CHEBI:58351"/>
        <dbReference type="ChEBI" id="CHEBI:60052"/>
        <dbReference type="EC" id="4.99.1.4"/>
    </reaction>
</comment>
<comment type="pathway">
    <text evidence="1">Cofactor biosynthesis; adenosylcobalamin biosynthesis; precorrin-2 from uroporphyrinogen III: step 1/1.</text>
</comment>
<comment type="pathway">
    <text evidence="1">Cofactor biosynthesis; adenosylcobalamin biosynthesis; sirohydrochlorin from precorrin-2: step 1/1.</text>
</comment>
<comment type="pathway">
    <text evidence="1">Porphyrin-containing compound metabolism; siroheme biosynthesis; precorrin-2 from uroporphyrinogen III: step 1/1.</text>
</comment>
<comment type="pathway">
    <text evidence="1">Porphyrin-containing compound metabolism; siroheme biosynthesis; siroheme from sirohydrochlorin: step 1/1.</text>
</comment>
<comment type="pathway">
    <text evidence="1">Porphyrin-containing compound metabolism; siroheme biosynthesis; sirohydrochlorin from precorrin-2: step 1/1.</text>
</comment>
<comment type="similarity">
    <text evidence="1">In the N-terminal section; belongs to the precorrin-2 dehydrogenase / sirohydrochlorin ferrochelatase family.</text>
</comment>
<comment type="similarity">
    <text evidence="1">In the C-terminal section; belongs to the precorrin methyltransferase family.</text>
</comment>
<keyword id="KW-0169">Cobalamin biosynthesis</keyword>
<keyword id="KW-0456">Lyase</keyword>
<keyword id="KW-0489">Methyltransferase</keyword>
<keyword id="KW-0511">Multifunctional enzyme</keyword>
<keyword id="KW-0520">NAD</keyword>
<keyword id="KW-0560">Oxidoreductase</keyword>
<keyword id="KW-0597">Phosphoprotein</keyword>
<keyword id="KW-0627">Porphyrin biosynthesis</keyword>
<keyword id="KW-0949">S-adenosyl-L-methionine</keyword>
<keyword id="KW-0808">Transferase</keyword>
<feature type="chain" id="PRO_0000330571" description="Siroheme synthase 2">
    <location>
        <begin position="1"/>
        <end position="472"/>
    </location>
</feature>
<feature type="region of interest" description="Precorrin-2 dehydrogenase /sirohydrochlorin ferrochelatase" evidence="1">
    <location>
        <begin position="1"/>
        <end position="204"/>
    </location>
</feature>
<feature type="region of interest" description="Uroporphyrinogen-III C-methyltransferase" evidence="1">
    <location>
        <begin position="216"/>
        <end position="472"/>
    </location>
</feature>
<feature type="active site" description="Proton acceptor" evidence="1">
    <location>
        <position position="248"/>
    </location>
</feature>
<feature type="active site" description="Proton donor" evidence="1">
    <location>
        <position position="270"/>
    </location>
</feature>
<feature type="binding site" evidence="1">
    <location>
        <begin position="22"/>
        <end position="23"/>
    </location>
    <ligand>
        <name>NAD(+)</name>
        <dbReference type="ChEBI" id="CHEBI:57540"/>
    </ligand>
</feature>
<feature type="binding site" evidence="1">
    <location>
        <begin position="43"/>
        <end position="44"/>
    </location>
    <ligand>
        <name>NAD(+)</name>
        <dbReference type="ChEBI" id="CHEBI:57540"/>
    </ligand>
</feature>
<feature type="binding site" evidence="1">
    <location>
        <position position="225"/>
    </location>
    <ligand>
        <name>S-adenosyl-L-methionine</name>
        <dbReference type="ChEBI" id="CHEBI:59789"/>
    </ligand>
</feature>
<feature type="binding site" evidence="1">
    <location>
        <begin position="301"/>
        <end position="303"/>
    </location>
    <ligand>
        <name>S-adenosyl-L-methionine</name>
        <dbReference type="ChEBI" id="CHEBI:59789"/>
    </ligand>
</feature>
<feature type="binding site" evidence="1">
    <location>
        <position position="306"/>
    </location>
    <ligand>
        <name>S-adenosyl-L-methionine</name>
        <dbReference type="ChEBI" id="CHEBI:59789"/>
    </ligand>
</feature>
<feature type="binding site" evidence="1">
    <location>
        <begin position="331"/>
        <end position="332"/>
    </location>
    <ligand>
        <name>S-adenosyl-L-methionine</name>
        <dbReference type="ChEBI" id="CHEBI:59789"/>
    </ligand>
</feature>
<feature type="binding site" evidence="1">
    <location>
        <position position="382"/>
    </location>
    <ligand>
        <name>S-adenosyl-L-methionine</name>
        <dbReference type="ChEBI" id="CHEBI:59789"/>
    </ligand>
</feature>
<feature type="binding site" evidence="1">
    <location>
        <position position="411"/>
    </location>
    <ligand>
        <name>S-adenosyl-L-methionine</name>
        <dbReference type="ChEBI" id="CHEBI:59789"/>
    </ligand>
</feature>
<feature type="modified residue" description="Phosphoserine" evidence="1">
    <location>
        <position position="128"/>
    </location>
</feature>